<accession>Q1GI26</accession>
<proteinExistence type="inferred from homology"/>
<gene>
    <name evidence="1" type="primary">ndk</name>
    <name type="ordered locus">TM1040_0957</name>
</gene>
<reference key="1">
    <citation type="submission" date="2006-05" db="EMBL/GenBank/DDBJ databases">
        <title>Complete sequence of chromosome of Silicibacter sp. TM1040.</title>
        <authorList>
            <consortium name="US DOE Joint Genome Institute"/>
            <person name="Copeland A."/>
            <person name="Lucas S."/>
            <person name="Lapidus A."/>
            <person name="Barry K."/>
            <person name="Detter J.C."/>
            <person name="Glavina del Rio T."/>
            <person name="Hammon N."/>
            <person name="Israni S."/>
            <person name="Dalin E."/>
            <person name="Tice H."/>
            <person name="Pitluck S."/>
            <person name="Brettin T."/>
            <person name="Bruce D."/>
            <person name="Han C."/>
            <person name="Tapia R."/>
            <person name="Goodwin L."/>
            <person name="Thompson L.S."/>
            <person name="Gilna P."/>
            <person name="Schmutz J."/>
            <person name="Larimer F."/>
            <person name="Land M."/>
            <person name="Hauser L."/>
            <person name="Kyrpides N."/>
            <person name="Kim E."/>
            <person name="Belas R."/>
            <person name="Moran M.A."/>
            <person name="Buchan A."/>
            <person name="Gonzalez J.M."/>
            <person name="Schell M.A."/>
            <person name="Sun F."/>
            <person name="Richardson P."/>
        </authorList>
    </citation>
    <scope>NUCLEOTIDE SEQUENCE [LARGE SCALE GENOMIC DNA]</scope>
    <source>
        <strain>TM1040</strain>
    </source>
</reference>
<name>NDK_RUEST</name>
<feature type="chain" id="PRO_0000267804" description="Nucleoside diphosphate kinase">
    <location>
        <begin position="1"/>
        <end position="140"/>
    </location>
</feature>
<feature type="active site" description="Pros-phosphohistidine intermediate" evidence="1">
    <location>
        <position position="117"/>
    </location>
</feature>
<feature type="binding site" evidence="1">
    <location>
        <position position="11"/>
    </location>
    <ligand>
        <name>ATP</name>
        <dbReference type="ChEBI" id="CHEBI:30616"/>
    </ligand>
</feature>
<feature type="binding site" evidence="1">
    <location>
        <position position="59"/>
    </location>
    <ligand>
        <name>ATP</name>
        <dbReference type="ChEBI" id="CHEBI:30616"/>
    </ligand>
</feature>
<feature type="binding site" evidence="1">
    <location>
        <position position="87"/>
    </location>
    <ligand>
        <name>ATP</name>
        <dbReference type="ChEBI" id="CHEBI:30616"/>
    </ligand>
</feature>
<feature type="binding site" evidence="1">
    <location>
        <position position="93"/>
    </location>
    <ligand>
        <name>ATP</name>
        <dbReference type="ChEBI" id="CHEBI:30616"/>
    </ligand>
</feature>
<feature type="binding site" evidence="1">
    <location>
        <position position="104"/>
    </location>
    <ligand>
        <name>ATP</name>
        <dbReference type="ChEBI" id="CHEBI:30616"/>
    </ligand>
</feature>
<feature type="binding site" evidence="1">
    <location>
        <position position="114"/>
    </location>
    <ligand>
        <name>ATP</name>
        <dbReference type="ChEBI" id="CHEBI:30616"/>
    </ligand>
</feature>
<sequence>MALERTFSIIKPDATRRNLTGAINAKFEEAGLRIVAQKRIHMTKAQAGKFYAVHAERPFYDELCEFMSSAPVVVQVLEGEGAIAKNREIMGATNPADAAPGTIRAEFAESVGENSVHGSDAPETAAEEIAYFFSGLELVG</sequence>
<organism>
    <name type="scientific">Ruegeria sp. (strain TM1040)</name>
    <name type="common">Silicibacter sp.</name>
    <dbReference type="NCBI Taxonomy" id="292414"/>
    <lineage>
        <taxon>Bacteria</taxon>
        <taxon>Pseudomonadati</taxon>
        <taxon>Pseudomonadota</taxon>
        <taxon>Alphaproteobacteria</taxon>
        <taxon>Rhodobacterales</taxon>
        <taxon>Roseobacteraceae</taxon>
        <taxon>Ruegeria</taxon>
    </lineage>
</organism>
<keyword id="KW-0067">ATP-binding</keyword>
<keyword id="KW-0963">Cytoplasm</keyword>
<keyword id="KW-0418">Kinase</keyword>
<keyword id="KW-0460">Magnesium</keyword>
<keyword id="KW-0479">Metal-binding</keyword>
<keyword id="KW-0546">Nucleotide metabolism</keyword>
<keyword id="KW-0547">Nucleotide-binding</keyword>
<keyword id="KW-0597">Phosphoprotein</keyword>
<keyword id="KW-1185">Reference proteome</keyword>
<keyword id="KW-0808">Transferase</keyword>
<comment type="function">
    <text evidence="1">Major role in the synthesis of nucleoside triphosphates other than ATP. The ATP gamma phosphate is transferred to the NDP beta phosphate via a ping-pong mechanism, using a phosphorylated active-site intermediate.</text>
</comment>
<comment type="catalytic activity">
    <reaction evidence="1">
        <text>a 2'-deoxyribonucleoside 5'-diphosphate + ATP = a 2'-deoxyribonucleoside 5'-triphosphate + ADP</text>
        <dbReference type="Rhea" id="RHEA:44640"/>
        <dbReference type="ChEBI" id="CHEBI:30616"/>
        <dbReference type="ChEBI" id="CHEBI:61560"/>
        <dbReference type="ChEBI" id="CHEBI:73316"/>
        <dbReference type="ChEBI" id="CHEBI:456216"/>
        <dbReference type="EC" id="2.7.4.6"/>
    </reaction>
</comment>
<comment type="catalytic activity">
    <reaction evidence="1">
        <text>a ribonucleoside 5'-diphosphate + ATP = a ribonucleoside 5'-triphosphate + ADP</text>
        <dbReference type="Rhea" id="RHEA:18113"/>
        <dbReference type="ChEBI" id="CHEBI:30616"/>
        <dbReference type="ChEBI" id="CHEBI:57930"/>
        <dbReference type="ChEBI" id="CHEBI:61557"/>
        <dbReference type="ChEBI" id="CHEBI:456216"/>
        <dbReference type="EC" id="2.7.4.6"/>
    </reaction>
</comment>
<comment type="cofactor">
    <cofactor evidence="1">
        <name>Mg(2+)</name>
        <dbReference type="ChEBI" id="CHEBI:18420"/>
    </cofactor>
</comment>
<comment type="subunit">
    <text evidence="1">Homotetramer.</text>
</comment>
<comment type="subcellular location">
    <subcellularLocation>
        <location evidence="1">Cytoplasm</location>
    </subcellularLocation>
</comment>
<comment type="similarity">
    <text evidence="1">Belongs to the NDK family.</text>
</comment>
<evidence type="ECO:0000255" key="1">
    <source>
        <dbReference type="HAMAP-Rule" id="MF_00451"/>
    </source>
</evidence>
<protein>
    <recommendedName>
        <fullName evidence="1">Nucleoside diphosphate kinase</fullName>
        <shortName evidence="1">NDK</shortName>
        <shortName evidence="1">NDP kinase</shortName>
        <ecNumber evidence="1">2.7.4.6</ecNumber>
    </recommendedName>
    <alternativeName>
        <fullName evidence="1">Nucleoside-2-P kinase</fullName>
    </alternativeName>
</protein>
<dbReference type="EC" id="2.7.4.6" evidence="1"/>
<dbReference type="EMBL" id="CP000377">
    <property type="protein sequence ID" value="ABF63690.1"/>
    <property type="molecule type" value="Genomic_DNA"/>
</dbReference>
<dbReference type="RefSeq" id="WP_011538300.1">
    <property type="nucleotide sequence ID" value="NC_008044.1"/>
</dbReference>
<dbReference type="SMR" id="Q1GI26"/>
<dbReference type="STRING" id="292414.TM1040_0957"/>
<dbReference type="KEGG" id="sit:TM1040_0957"/>
<dbReference type="eggNOG" id="COG0105">
    <property type="taxonomic scope" value="Bacteria"/>
</dbReference>
<dbReference type="HOGENOM" id="CLU_060216_8_1_5"/>
<dbReference type="OrthoDB" id="9801161at2"/>
<dbReference type="Proteomes" id="UP000000636">
    <property type="component" value="Chromosome"/>
</dbReference>
<dbReference type="GO" id="GO:0005737">
    <property type="term" value="C:cytoplasm"/>
    <property type="evidence" value="ECO:0007669"/>
    <property type="project" value="UniProtKB-SubCell"/>
</dbReference>
<dbReference type="GO" id="GO:0005524">
    <property type="term" value="F:ATP binding"/>
    <property type="evidence" value="ECO:0007669"/>
    <property type="project" value="UniProtKB-UniRule"/>
</dbReference>
<dbReference type="GO" id="GO:0046872">
    <property type="term" value="F:metal ion binding"/>
    <property type="evidence" value="ECO:0007669"/>
    <property type="project" value="UniProtKB-KW"/>
</dbReference>
<dbReference type="GO" id="GO:0004550">
    <property type="term" value="F:nucleoside diphosphate kinase activity"/>
    <property type="evidence" value="ECO:0007669"/>
    <property type="project" value="UniProtKB-UniRule"/>
</dbReference>
<dbReference type="GO" id="GO:0006241">
    <property type="term" value="P:CTP biosynthetic process"/>
    <property type="evidence" value="ECO:0007669"/>
    <property type="project" value="UniProtKB-UniRule"/>
</dbReference>
<dbReference type="GO" id="GO:0006183">
    <property type="term" value="P:GTP biosynthetic process"/>
    <property type="evidence" value="ECO:0007669"/>
    <property type="project" value="UniProtKB-UniRule"/>
</dbReference>
<dbReference type="GO" id="GO:0006228">
    <property type="term" value="P:UTP biosynthetic process"/>
    <property type="evidence" value="ECO:0007669"/>
    <property type="project" value="UniProtKB-UniRule"/>
</dbReference>
<dbReference type="CDD" id="cd04413">
    <property type="entry name" value="NDPk_I"/>
    <property type="match status" value="1"/>
</dbReference>
<dbReference type="FunFam" id="3.30.70.141:FF:000001">
    <property type="entry name" value="Nucleoside diphosphate kinase"/>
    <property type="match status" value="1"/>
</dbReference>
<dbReference type="Gene3D" id="3.30.70.141">
    <property type="entry name" value="Nucleoside diphosphate kinase-like domain"/>
    <property type="match status" value="1"/>
</dbReference>
<dbReference type="HAMAP" id="MF_00451">
    <property type="entry name" value="NDP_kinase"/>
    <property type="match status" value="1"/>
</dbReference>
<dbReference type="InterPro" id="IPR034907">
    <property type="entry name" value="NDK-like_dom"/>
</dbReference>
<dbReference type="InterPro" id="IPR036850">
    <property type="entry name" value="NDK-like_dom_sf"/>
</dbReference>
<dbReference type="InterPro" id="IPR001564">
    <property type="entry name" value="Nucleoside_diP_kinase"/>
</dbReference>
<dbReference type="InterPro" id="IPR023005">
    <property type="entry name" value="Nucleoside_diP_kinase_AS"/>
</dbReference>
<dbReference type="NCBIfam" id="NF001908">
    <property type="entry name" value="PRK00668.1"/>
    <property type="match status" value="1"/>
</dbReference>
<dbReference type="PANTHER" id="PTHR11349">
    <property type="entry name" value="NUCLEOSIDE DIPHOSPHATE KINASE"/>
    <property type="match status" value="1"/>
</dbReference>
<dbReference type="Pfam" id="PF00334">
    <property type="entry name" value="NDK"/>
    <property type="match status" value="1"/>
</dbReference>
<dbReference type="PRINTS" id="PR01243">
    <property type="entry name" value="NUCDPKINASE"/>
</dbReference>
<dbReference type="SMART" id="SM00562">
    <property type="entry name" value="NDK"/>
    <property type="match status" value="1"/>
</dbReference>
<dbReference type="SUPFAM" id="SSF54919">
    <property type="entry name" value="Nucleoside diphosphate kinase, NDK"/>
    <property type="match status" value="1"/>
</dbReference>
<dbReference type="PROSITE" id="PS00469">
    <property type="entry name" value="NDPK"/>
    <property type="match status" value="1"/>
</dbReference>
<dbReference type="PROSITE" id="PS51374">
    <property type="entry name" value="NDPK_LIKE"/>
    <property type="match status" value="1"/>
</dbReference>